<accession>Q0T8E9</accession>
<proteinExistence type="inferred from homology"/>
<sequence length="176" mass="20136">MILIIYAHPYPHHSHANKRMLEQARTLEGVEIRSLYQLYPDFNIDIAAEQEALSRADLIVWQHPMQWYSIPPLLKLWIDKVLSHGWAYGHGGTALHGKHLLWAVTTGGGESHFEIGAHPGFDVLSQPLQATAIYCGLNWLPPFAMHCTFICDDETLEGQARHYKQRLLEWQEAHHG</sequence>
<comment type="function">
    <text evidence="1">Regulatory subunit of a potassium efflux system that confers protection against electrophiles. Required for full activity of KefC. Shows redox enzymatic activity, but this enzymatic activity is not required for activation of KefC.</text>
</comment>
<comment type="catalytic activity">
    <reaction evidence="1">
        <text>a quinone + NADH + H(+) = a quinol + NAD(+)</text>
        <dbReference type="Rhea" id="RHEA:46160"/>
        <dbReference type="ChEBI" id="CHEBI:15378"/>
        <dbReference type="ChEBI" id="CHEBI:24646"/>
        <dbReference type="ChEBI" id="CHEBI:57540"/>
        <dbReference type="ChEBI" id="CHEBI:57945"/>
        <dbReference type="ChEBI" id="CHEBI:132124"/>
        <dbReference type="EC" id="1.6.5.2"/>
    </reaction>
</comment>
<comment type="catalytic activity">
    <reaction evidence="1">
        <text>a quinone + NADPH + H(+) = a quinol + NADP(+)</text>
        <dbReference type="Rhea" id="RHEA:46164"/>
        <dbReference type="ChEBI" id="CHEBI:15378"/>
        <dbReference type="ChEBI" id="CHEBI:24646"/>
        <dbReference type="ChEBI" id="CHEBI:57783"/>
        <dbReference type="ChEBI" id="CHEBI:58349"/>
        <dbReference type="ChEBI" id="CHEBI:132124"/>
        <dbReference type="EC" id="1.6.5.2"/>
    </reaction>
</comment>
<comment type="cofactor">
    <cofactor evidence="1">
        <name>FMN</name>
        <dbReference type="ChEBI" id="CHEBI:58210"/>
    </cofactor>
</comment>
<comment type="subunit">
    <text evidence="1">Homodimer. Interacts with KefC.</text>
</comment>
<comment type="subcellular location">
    <subcellularLocation>
        <location evidence="1">Cell inner membrane</location>
        <topology evidence="1">Peripheral membrane protein</topology>
        <orientation evidence="1">Cytoplasmic side</orientation>
    </subcellularLocation>
</comment>
<comment type="similarity">
    <text evidence="1">Belongs to the NAD(P)H dehydrogenase (quinone) family. KefF subfamily.</text>
</comment>
<feature type="chain" id="PRO_1000068472" description="Glutathione-regulated potassium-efflux system ancillary protein KefF">
    <location>
        <begin position="1"/>
        <end position="176"/>
    </location>
</feature>
<feature type="binding site" evidence="1">
    <location>
        <position position="8"/>
    </location>
    <ligand>
        <name>FMN</name>
        <dbReference type="ChEBI" id="CHEBI:58210"/>
    </ligand>
</feature>
<feature type="binding site" evidence="1">
    <location>
        <begin position="14"/>
        <end position="17"/>
    </location>
    <ligand>
        <name>FMN</name>
        <dbReference type="ChEBI" id="CHEBI:58210"/>
    </ligand>
</feature>
<feature type="binding site" evidence="1">
    <location>
        <begin position="65"/>
        <end position="68"/>
    </location>
    <ligand>
        <name>FMN</name>
        <dbReference type="ChEBI" id="CHEBI:58210"/>
    </ligand>
</feature>
<feature type="binding site" evidence="1">
    <location>
        <begin position="105"/>
        <end position="108"/>
    </location>
    <ligand>
        <name>FMN</name>
        <dbReference type="ChEBI" id="CHEBI:58210"/>
    </ligand>
</feature>
<gene>
    <name evidence="1" type="primary">kefF</name>
    <name type="ordered locus">SFV_0040</name>
</gene>
<dbReference type="EC" id="1.6.5.2" evidence="1"/>
<dbReference type="EMBL" id="CP000266">
    <property type="protein sequence ID" value="ABF02327.1"/>
    <property type="molecule type" value="Genomic_DNA"/>
</dbReference>
<dbReference type="RefSeq" id="WP_000600737.1">
    <property type="nucleotide sequence ID" value="NC_008258.1"/>
</dbReference>
<dbReference type="SMR" id="Q0T8E9"/>
<dbReference type="GeneID" id="86862558"/>
<dbReference type="KEGG" id="sfv:SFV_0040"/>
<dbReference type="HOGENOM" id="CLU_058643_0_2_6"/>
<dbReference type="Proteomes" id="UP000000659">
    <property type="component" value="Chromosome"/>
</dbReference>
<dbReference type="GO" id="GO:0005886">
    <property type="term" value="C:plasma membrane"/>
    <property type="evidence" value="ECO:0007669"/>
    <property type="project" value="UniProtKB-SubCell"/>
</dbReference>
<dbReference type="GO" id="GO:0009055">
    <property type="term" value="F:electron transfer activity"/>
    <property type="evidence" value="ECO:0007669"/>
    <property type="project" value="TreeGrafter"/>
</dbReference>
<dbReference type="GO" id="GO:0010181">
    <property type="term" value="F:FMN binding"/>
    <property type="evidence" value="ECO:0007669"/>
    <property type="project" value="UniProtKB-UniRule"/>
</dbReference>
<dbReference type="GO" id="GO:0050136">
    <property type="term" value="F:NADH:ubiquinone reductase (non-electrogenic) activity"/>
    <property type="evidence" value="ECO:0007669"/>
    <property type="project" value="RHEA"/>
</dbReference>
<dbReference type="GO" id="GO:0008753">
    <property type="term" value="F:NADPH dehydrogenase (quinone) activity"/>
    <property type="evidence" value="ECO:0007669"/>
    <property type="project" value="RHEA"/>
</dbReference>
<dbReference type="GO" id="GO:1901381">
    <property type="term" value="P:positive regulation of potassium ion transmembrane transport"/>
    <property type="evidence" value="ECO:0007669"/>
    <property type="project" value="UniProtKB-UniRule"/>
</dbReference>
<dbReference type="GO" id="GO:0006813">
    <property type="term" value="P:potassium ion transport"/>
    <property type="evidence" value="ECO:0007669"/>
    <property type="project" value="InterPro"/>
</dbReference>
<dbReference type="FunFam" id="3.40.50.360:FF:000008">
    <property type="entry name" value="Glutathione-regulated potassium-efflux system ancillary protein KefF"/>
    <property type="match status" value="1"/>
</dbReference>
<dbReference type="Gene3D" id="3.40.50.360">
    <property type="match status" value="1"/>
</dbReference>
<dbReference type="HAMAP" id="MF_01414">
    <property type="entry name" value="K_H_efflux_KefF"/>
    <property type="match status" value="1"/>
</dbReference>
<dbReference type="InterPro" id="IPR003680">
    <property type="entry name" value="Flavodoxin_fold"/>
</dbReference>
<dbReference type="InterPro" id="IPR029039">
    <property type="entry name" value="Flavoprotein-like_sf"/>
</dbReference>
<dbReference type="InterPro" id="IPR023948">
    <property type="entry name" value="K_H_efflux_KefF"/>
</dbReference>
<dbReference type="InterPro" id="IPR046980">
    <property type="entry name" value="KefG/KefF"/>
</dbReference>
<dbReference type="NCBIfam" id="NF002044">
    <property type="entry name" value="PRK00871.1"/>
    <property type="match status" value="1"/>
</dbReference>
<dbReference type="PANTHER" id="PTHR47307:SF2">
    <property type="entry name" value="GLUTATHIONE-REGULATED POTASSIUM-EFFLUX SYSTEM ANCILLARY PROTEIN KEFF"/>
    <property type="match status" value="1"/>
</dbReference>
<dbReference type="PANTHER" id="PTHR47307">
    <property type="entry name" value="GLUTATHIONE-REGULATED POTASSIUM-EFFLUX SYSTEM ANCILLARY PROTEIN KEFG"/>
    <property type="match status" value="1"/>
</dbReference>
<dbReference type="Pfam" id="PF02525">
    <property type="entry name" value="Flavodoxin_2"/>
    <property type="match status" value="1"/>
</dbReference>
<dbReference type="SUPFAM" id="SSF52218">
    <property type="entry name" value="Flavoproteins"/>
    <property type="match status" value="1"/>
</dbReference>
<evidence type="ECO:0000255" key="1">
    <source>
        <dbReference type="HAMAP-Rule" id="MF_01414"/>
    </source>
</evidence>
<reference key="1">
    <citation type="journal article" date="2006" name="BMC Genomics">
        <title>Complete genome sequence of Shigella flexneri 5b and comparison with Shigella flexneri 2a.</title>
        <authorList>
            <person name="Nie H."/>
            <person name="Yang F."/>
            <person name="Zhang X."/>
            <person name="Yang J."/>
            <person name="Chen L."/>
            <person name="Wang J."/>
            <person name="Xiong Z."/>
            <person name="Peng J."/>
            <person name="Sun L."/>
            <person name="Dong J."/>
            <person name="Xue Y."/>
            <person name="Xu X."/>
            <person name="Chen S."/>
            <person name="Yao Z."/>
            <person name="Shen Y."/>
            <person name="Jin Q."/>
        </authorList>
    </citation>
    <scope>NUCLEOTIDE SEQUENCE [LARGE SCALE GENOMIC DNA]</scope>
    <source>
        <strain>8401</strain>
    </source>
</reference>
<keyword id="KW-0997">Cell inner membrane</keyword>
<keyword id="KW-1003">Cell membrane</keyword>
<keyword id="KW-0285">Flavoprotein</keyword>
<keyword id="KW-0288">FMN</keyword>
<keyword id="KW-0472">Membrane</keyword>
<keyword id="KW-0520">NAD</keyword>
<keyword id="KW-0560">Oxidoreductase</keyword>
<name>KEFF_SHIF8</name>
<protein>
    <recommendedName>
        <fullName evidence="1">Glutathione-regulated potassium-efflux system ancillary protein KefF</fullName>
    </recommendedName>
    <alternativeName>
        <fullName evidence="1">Quinone oxidoreductase KefF</fullName>
        <ecNumber evidence="1">1.6.5.2</ecNumber>
    </alternativeName>
</protein>
<organism>
    <name type="scientific">Shigella flexneri serotype 5b (strain 8401)</name>
    <dbReference type="NCBI Taxonomy" id="373384"/>
    <lineage>
        <taxon>Bacteria</taxon>
        <taxon>Pseudomonadati</taxon>
        <taxon>Pseudomonadota</taxon>
        <taxon>Gammaproteobacteria</taxon>
        <taxon>Enterobacterales</taxon>
        <taxon>Enterobacteriaceae</taxon>
        <taxon>Shigella</taxon>
    </lineage>
</organism>